<feature type="chain" id="PRO_1000140001" description="Pimeloyl-[acyl-carrier protein] methyl ester esterase">
    <location>
        <begin position="1"/>
        <end position="256"/>
    </location>
</feature>
<feature type="domain" description="AB hydrolase-1" evidence="1">
    <location>
        <begin position="15"/>
        <end position="242"/>
    </location>
</feature>
<feature type="active site" description="Nucleophile" evidence="2">
    <location>
        <position position="82"/>
    </location>
</feature>
<feature type="active site" evidence="2">
    <location>
        <position position="207"/>
    </location>
</feature>
<feature type="active site" evidence="2">
    <location>
        <position position="235"/>
    </location>
</feature>
<feature type="binding site" evidence="2">
    <location>
        <position position="22"/>
    </location>
    <ligand>
        <name>substrate</name>
    </ligand>
</feature>
<feature type="binding site" evidence="2">
    <location>
        <begin position="82"/>
        <end position="83"/>
    </location>
    <ligand>
        <name>substrate</name>
    </ligand>
</feature>
<feature type="binding site" evidence="2">
    <location>
        <begin position="143"/>
        <end position="147"/>
    </location>
    <ligand>
        <name>substrate</name>
    </ligand>
</feature>
<feature type="binding site" evidence="2">
    <location>
        <position position="235"/>
    </location>
    <ligand>
        <name>substrate</name>
    </ligand>
</feature>
<name>BIOH_SALHS</name>
<dbReference type="EC" id="3.1.1.85" evidence="2"/>
<dbReference type="EMBL" id="CP001120">
    <property type="protein sequence ID" value="ACF67197.1"/>
    <property type="molecule type" value="Genomic_DNA"/>
</dbReference>
<dbReference type="RefSeq" id="WP_000998146.1">
    <property type="nucleotide sequence ID" value="NC_011083.1"/>
</dbReference>
<dbReference type="SMR" id="B4TKT6"/>
<dbReference type="ESTHER" id="salty-BIOH">
    <property type="family name" value="BioH"/>
</dbReference>
<dbReference type="KEGG" id="seh:SeHA_C3817"/>
<dbReference type="HOGENOM" id="CLU_020336_12_2_6"/>
<dbReference type="UniPathway" id="UPA00078"/>
<dbReference type="Proteomes" id="UP000001866">
    <property type="component" value="Chromosome"/>
</dbReference>
<dbReference type="GO" id="GO:0005737">
    <property type="term" value="C:cytoplasm"/>
    <property type="evidence" value="ECO:0007669"/>
    <property type="project" value="UniProtKB-SubCell"/>
</dbReference>
<dbReference type="GO" id="GO:0090499">
    <property type="term" value="F:pimelyl-[acyl-carrier protein] methyl ester esterase activity"/>
    <property type="evidence" value="ECO:0007669"/>
    <property type="project" value="UniProtKB-EC"/>
</dbReference>
<dbReference type="GO" id="GO:0009102">
    <property type="term" value="P:biotin biosynthetic process"/>
    <property type="evidence" value="ECO:0007669"/>
    <property type="project" value="UniProtKB-UniRule"/>
</dbReference>
<dbReference type="FunFam" id="3.40.50.1820:FF:000045">
    <property type="entry name" value="Pimeloyl-[acyl-carrier protein] methyl ester esterase"/>
    <property type="match status" value="1"/>
</dbReference>
<dbReference type="Gene3D" id="3.40.50.1820">
    <property type="entry name" value="alpha/beta hydrolase"/>
    <property type="match status" value="1"/>
</dbReference>
<dbReference type="HAMAP" id="MF_01260">
    <property type="entry name" value="Carboxylester"/>
    <property type="match status" value="1"/>
</dbReference>
<dbReference type="InterPro" id="IPR000073">
    <property type="entry name" value="AB_hydrolase_1"/>
</dbReference>
<dbReference type="InterPro" id="IPR029058">
    <property type="entry name" value="AB_hydrolase_fold"/>
</dbReference>
<dbReference type="InterPro" id="IPR010076">
    <property type="entry name" value="BioH"/>
</dbReference>
<dbReference type="InterPro" id="IPR050228">
    <property type="entry name" value="Carboxylesterase_BioH"/>
</dbReference>
<dbReference type="NCBIfam" id="TIGR01738">
    <property type="entry name" value="bioH"/>
    <property type="match status" value="1"/>
</dbReference>
<dbReference type="NCBIfam" id="NF007674">
    <property type="entry name" value="PRK10349.1"/>
    <property type="match status" value="1"/>
</dbReference>
<dbReference type="PANTHER" id="PTHR43194">
    <property type="entry name" value="HYDROLASE ALPHA/BETA FOLD FAMILY"/>
    <property type="match status" value="1"/>
</dbReference>
<dbReference type="PANTHER" id="PTHR43194:SF5">
    <property type="entry name" value="PIMELOYL-[ACYL-CARRIER PROTEIN] METHYL ESTER ESTERASE"/>
    <property type="match status" value="1"/>
</dbReference>
<dbReference type="Pfam" id="PF00561">
    <property type="entry name" value="Abhydrolase_1"/>
    <property type="match status" value="1"/>
</dbReference>
<dbReference type="SUPFAM" id="SSF53474">
    <property type="entry name" value="alpha/beta-Hydrolases"/>
    <property type="match status" value="1"/>
</dbReference>
<organism>
    <name type="scientific">Salmonella heidelberg (strain SL476)</name>
    <dbReference type="NCBI Taxonomy" id="454169"/>
    <lineage>
        <taxon>Bacteria</taxon>
        <taxon>Pseudomonadati</taxon>
        <taxon>Pseudomonadota</taxon>
        <taxon>Gammaproteobacteria</taxon>
        <taxon>Enterobacterales</taxon>
        <taxon>Enterobacteriaceae</taxon>
        <taxon>Salmonella</taxon>
    </lineage>
</organism>
<gene>
    <name evidence="2" type="primary">bioH</name>
    <name type="ordered locus">SeHA_C3817</name>
</gene>
<comment type="function">
    <text evidence="2">The physiological role of BioH is to remove the methyl group introduced by BioC when the pimeloyl moiety is complete. It allows to synthesize pimeloyl-ACP via the fatty acid synthetic pathway through the hydrolysis of the ester bonds of pimeloyl-ACP esters.</text>
</comment>
<comment type="catalytic activity">
    <reaction evidence="2">
        <text>6-carboxyhexanoyl-[ACP] methyl ester + H2O = 6-carboxyhexanoyl-[ACP] + methanol + H(+)</text>
        <dbReference type="Rhea" id="RHEA:42700"/>
        <dbReference type="Rhea" id="RHEA-COMP:9955"/>
        <dbReference type="Rhea" id="RHEA-COMP:10186"/>
        <dbReference type="ChEBI" id="CHEBI:15377"/>
        <dbReference type="ChEBI" id="CHEBI:15378"/>
        <dbReference type="ChEBI" id="CHEBI:17790"/>
        <dbReference type="ChEBI" id="CHEBI:78846"/>
        <dbReference type="ChEBI" id="CHEBI:82735"/>
        <dbReference type="EC" id="3.1.1.85"/>
    </reaction>
</comment>
<comment type="pathway">
    <text evidence="2">Cofactor biosynthesis; biotin biosynthesis.</text>
</comment>
<comment type="subunit">
    <text evidence="2">Monomer.</text>
</comment>
<comment type="subcellular location">
    <subcellularLocation>
        <location evidence="2">Cytoplasm</location>
    </subcellularLocation>
</comment>
<comment type="similarity">
    <text evidence="2">Belongs to the AB hydrolase superfamily. Carboxylesterase BioH family.</text>
</comment>
<reference key="1">
    <citation type="journal article" date="2011" name="J. Bacteriol.">
        <title>Comparative genomics of 28 Salmonella enterica isolates: evidence for CRISPR-mediated adaptive sublineage evolution.</title>
        <authorList>
            <person name="Fricke W.F."/>
            <person name="Mammel M.K."/>
            <person name="McDermott P.F."/>
            <person name="Tartera C."/>
            <person name="White D.G."/>
            <person name="Leclerc J.E."/>
            <person name="Ravel J."/>
            <person name="Cebula T.A."/>
        </authorList>
    </citation>
    <scope>NUCLEOTIDE SEQUENCE [LARGE SCALE GENOMIC DNA]</scope>
    <source>
        <strain>SL476</strain>
    </source>
</reference>
<sequence>MNDIWWQTYGEGNCHLVLLHGWGLNAEVWHCIREELGSHFTLHLVDLPGYGRSSGFGAMTLEEMTAQVAKNAPDQAIWLGWSLGGLVASQMALTHPERVQALVTVASSPCFSAREGWPGIKPEILGGFQQQLSDDFQRTVERFLALQTLGTETARQDARTLKSVVLAQPMPDVEVLNGGLEILKTVDLREALKNVNMPFLRLYGYLDGLVPRKIVPLLDTLWPHSTSQIMAKAAHAPFISHPAAFCQALMTLKSSL</sequence>
<evidence type="ECO:0000255" key="1"/>
<evidence type="ECO:0000255" key="2">
    <source>
        <dbReference type="HAMAP-Rule" id="MF_01260"/>
    </source>
</evidence>
<accession>B4TKT6</accession>
<protein>
    <recommendedName>
        <fullName evidence="2">Pimeloyl-[acyl-carrier protein] methyl ester esterase</fullName>
        <ecNumber evidence="2">3.1.1.85</ecNumber>
    </recommendedName>
    <alternativeName>
        <fullName evidence="2">Biotin synthesis protein BioH</fullName>
    </alternativeName>
    <alternativeName>
        <fullName evidence="2">Carboxylesterase BioH</fullName>
    </alternativeName>
</protein>
<proteinExistence type="inferred from homology"/>
<keyword id="KW-0093">Biotin biosynthesis</keyword>
<keyword id="KW-0963">Cytoplasm</keyword>
<keyword id="KW-0378">Hydrolase</keyword>
<keyword id="KW-0719">Serine esterase</keyword>